<sequence length="398" mass="43547">MSKTIAINAGSSSLKWQLYQMPEEAVLAQGIIERIGLKDSISTVKYDGKKEEQILDIHDHTEAVKILLNDLIHFGIIAAYDEITGVGHRVVAGGELFKESVVVNDKVLEQIEELSVLAPLHNPGAAAGIRAFRDILPDITSVCVFDTSFHTSMAKHTYLYPIPQKYYTDYKVRKYGAHGTSHKYVAQEAAKMLGRPLEELKLITAHIGNGVSITANYHGKSVDTSMGFTPLAGPMMGTRSGDIDPAIIPYLIEQDPELKDAADVVNMLNKKSGLSGVSGISSDMRDIEAGLQEDNPDAVLAYNIFIDRIKKCIGQYFAVLNGADALVFTAGMGENAPLMRQDVIGGLTWFGMDIDPEKNVFGYRGDISTPESKVKVLVISTDEELCIARDVERLKNTK</sequence>
<evidence type="ECO:0000255" key="1">
    <source>
        <dbReference type="HAMAP-Rule" id="MF_00020"/>
    </source>
</evidence>
<organism>
    <name type="scientific">Streptococcus pyogenes serotype M3 (strain ATCC BAA-595 / MGAS315)</name>
    <dbReference type="NCBI Taxonomy" id="198466"/>
    <lineage>
        <taxon>Bacteria</taxon>
        <taxon>Bacillati</taxon>
        <taxon>Bacillota</taxon>
        <taxon>Bacilli</taxon>
        <taxon>Lactobacillales</taxon>
        <taxon>Streptococcaceae</taxon>
        <taxon>Streptococcus</taxon>
    </lineage>
</organism>
<feature type="chain" id="PRO_0000107626" description="Acetate kinase">
    <location>
        <begin position="1"/>
        <end position="398"/>
    </location>
</feature>
<feature type="active site" description="Proton donor/acceptor" evidence="1">
    <location>
        <position position="146"/>
    </location>
</feature>
<feature type="binding site" evidence="1">
    <location>
        <position position="8"/>
    </location>
    <ligand>
        <name>Mg(2+)</name>
        <dbReference type="ChEBI" id="CHEBI:18420"/>
    </ligand>
</feature>
<feature type="binding site" evidence="1">
    <location>
        <position position="15"/>
    </location>
    <ligand>
        <name>ATP</name>
        <dbReference type="ChEBI" id="CHEBI:30616"/>
    </ligand>
</feature>
<feature type="binding site" evidence="1">
    <location>
        <position position="89"/>
    </location>
    <ligand>
        <name>substrate</name>
    </ligand>
</feature>
<feature type="binding site" evidence="1">
    <location>
        <begin position="206"/>
        <end position="210"/>
    </location>
    <ligand>
        <name>ATP</name>
        <dbReference type="ChEBI" id="CHEBI:30616"/>
    </ligand>
</feature>
<feature type="binding site" evidence="1">
    <location>
        <begin position="283"/>
        <end position="285"/>
    </location>
    <ligand>
        <name>ATP</name>
        <dbReference type="ChEBI" id="CHEBI:30616"/>
    </ligand>
</feature>
<feature type="binding site" evidence="1">
    <location>
        <begin position="331"/>
        <end position="335"/>
    </location>
    <ligand>
        <name>ATP</name>
        <dbReference type="ChEBI" id="CHEBI:30616"/>
    </ligand>
</feature>
<feature type="binding site" evidence="1">
    <location>
        <position position="383"/>
    </location>
    <ligand>
        <name>Mg(2+)</name>
        <dbReference type="ChEBI" id="CHEBI:18420"/>
    </ligand>
</feature>
<feature type="site" description="Transition state stabilizer" evidence="1">
    <location>
        <position position="178"/>
    </location>
</feature>
<feature type="site" description="Transition state stabilizer" evidence="1">
    <location>
        <position position="239"/>
    </location>
</feature>
<comment type="function">
    <text evidence="1">Catalyzes the formation of acetyl phosphate from acetate and ATP. Can also catalyze the reverse reaction.</text>
</comment>
<comment type="catalytic activity">
    <reaction evidence="1">
        <text>acetate + ATP = acetyl phosphate + ADP</text>
        <dbReference type="Rhea" id="RHEA:11352"/>
        <dbReference type="ChEBI" id="CHEBI:22191"/>
        <dbReference type="ChEBI" id="CHEBI:30089"/>
        <dbReference type="ChEBI" id="CHEBI:30616"/>
        <dbReference type="ChEBI" id="CHEBI:456216"/>
        <dbReference type="EC" id="2.7.2.1"/>
    </reaction>
</comment>
<comment type="cofactor">
    <cofactor evidence="1">
        <name>Mg(2+)</name>
        <dbReference type="ChEBI" id="CHEBI:18420"/>
    </cofactor>
    <cofactor evidence="1">
        <name>Mn(2+)</name>
        <dbReference type="ChEBI" id="CHEBI:29035"/>
    </cofactor>
    <text evidence="1">Mg(2+). Can also accept Mn(2+).</text>
</comment>
<comment type="pathway">
    <text evidence="1">Metabolic intermediate biosynthesis; acetyl-CoA biosynthesis; acetyl-CoA from acetate: step 1/2.</text>
</comment>
<comment type="subunit">
    <text evidence="1">Homodimer.</text>
</comment>
<comment type="subcellular location">
    <subcellularLocation>
        <location evidence="1">Cytoplasm</location>
    </subcellularLocation>
</comment>
<comment type="similarity">
    <text evidence="1">Belongs to the acetokinase family.</text>
</comment>
<accession>P0CZ46</accession>
<accession>P63416</accession>
<accession>Q9A1T1</accession>
<gene>
    <name evidence="1" type="primary">ackA</name>
    <name type="ordered locus">SpyM3_0086</name>
</gene>
<proteinExistence type="inferred from homology"/>
<protein>
    <recommendedName>
        <fullName evidence="1">Acetate kinase</fullName>
        <ecNumber evidence="1">2.7.2.1</ecNumber>
    </recommendedName>
    <alternativeName>
        <fullName evidence="1">Acetokinase</fullName>
    </alternativeName>
</protein>
<dbReference type="EC" id="2.7.2.1" evidence="1"/>
<dbReference type="EMBL" id="AE014074">
    <property type="protein sequence ID" value="AAM78693.1"/>
    <property type="molecule type" value="Genomic_DNA"/>
</dbReference>
<dbReference type="RefSeq" id="WP_010921803.1">
    <property type="nucleotide sequence ID" value="NC_004070.1"/>
</dbReference>
<dbReference type="SMR" id="P0CZ46"/>
<dbReference type="KEGG" id="spg:SpyM3_0086"/>
<dbReference type="HOGENOM" id="CLU_020352_0_1_9"/>
<dbReference type="UniPathway" id="UPA00340">
    <property type="reaction ID" value="UER00458"/>
</dbReference>
<dbReference type="Proteomes" id="UP000000564">
    <property type="component" value="Chromosome"/>
</dbReference>
<dbReference type="GO" id="GO:0005737">
    <property type="term" value="C:cytoplasm"/>
    <property type="evidence" value="ECO:0007669"/>
    <property type="project" value="UniProtKB-SubCell"/>
</dbReference>
<dbReference type="GO" id="GO:0008776">
    <property type="term" value="F:acetate kinase activity"/>
    <property type="evidence" value="ECO:0007669"/>
    <property type="project" value="UniProtKB-UniRule"/>
</dbReference>
<dbReference type="GO" id="GO:0005524">
    <property type="term" value="F:ATP binding"/>
    <property type="evidence" value="ECO:0007669"/>
    <property type="project" value="UniProtKB-KW"/>
</dbReference>
<dbReference type="GO" id="GO:0000287">
    <property type="term" value="F:magnesium ion binding"/>
    <property type="evidence" value="ECO:0007669"/>
    <property type="project" value="UniProtKB-UniRule"/>
</dbReference>
<dbReference type="GO" id="GO:0006083">
    <property type="term" value="P:acetate metabolic process"/>
    <property type="evidence" value="ECO:0007669"/>
    <property type="project" value="TreeGrafter"/>
</dbReference>
<dbReference type="GO" id="GO:0006085">
    <property type="term" value="P:acetyl-CoA biosynthetic process"/>
    <property type="evidence" value="ECO:0007669"/>
    <property type="project" value="UniProtKB-UniRule"/>
</dbReference>
<dbReference type="CDD" id="cd24010">
    <property type="entry name" value="ASKHA_NBD_AcK_PK"/>
    <property type="match status" value="1"/>
</dbReference>
<dbReference type="Gene3D" id="3.30.420.40">
    <property type="match status" value="2"/>
</dbReference>
<dbReference type="HAMAP" id="MF_00020">
    <property type="entry name" value="Acetate_kinase"/>
    <property type="match status" value="1"/>
</dbReference>
<dbReference type="InterPro" id="IPR004372">
    <property type="entry name" value="Ac/propionate_kinase"/>
</dbReference>
<dbReference type="InterPro" id="IPR000890">
    <property type="entry name" value="Aliphatic_acid_kin_short-chain"/>
</dbReference>
<dbReference type="InterPro" id="IPR023865">
    <property type="entry name" value="Aliphatic_acid_kinase_CS"/>
</dbReference>
<dbReference type="InterPro" id="IPR043129">
    <property type="entry name" value="ATPase_NBD"/>
</dbReference>
<dbReference type="NCBIfam" id="TIGR00016">
    <property type="entry name" value="ackA"/>
    <property type="match status" value="1"/>
</dbReference>
<dbReference type="PANTHER" id="PTHR21060">
    <property type="entry name" value="ACETATE KINASE"/>
    <property type="match status" value="1"/>
</dbReference>
<dbReference type="PANTHER" id="PTHR21060:SF15">
    <property type="entry name" value="ACETATE KINASE-RELATED"/>
    <property type="match status" value="1"/>
</dbReference>
<dbReference type="Pfam" id="PF00871">
    <property type="entry name" value="Acetate_kinase"/>
    <property type="match status" value="1"/>
</dbReference>
<dbReference type="PIRSF" id="PIRSF000722">
    <property type="entry name" value="Acetate_prop_kin"/>
    <property type="match status" value="1"/>
</dbReference>
<dbReference type="PRINTS" id="PR00471">
    <property type="entry name" value="ACETATEKNASE"/>
</dbReference>
<dbReference type="SUPFAM" id="SSF53067">
    <property type="entry name" value="Actin-like ATPase domain"/>
    <property type="match status" value="2"/>
</dbReference>
<dbReference type="PROSITE" id="PS01075">
    <property type="entry name" value="ACETATE_KINASE_1"/>
    <property type="match status" value="1"/>
</dbReference>
<dbReference type="PROSITE" id="PS01076">
    <property type="entry name" value="ACETATE_KINASE_2"/>
    <property type="match status" value="1"/>
</dbReference>
<reference key="1">
    <citation type="journal article" date="2002" name="Proc. Natl. Acad. Sci. U.S.A.">
        <title>Genome sequence of a serotype M3 strain of group A Streptococcus: phage-encoded toxins, the high-virulence phenotype, and clone emergence.</title>
        <authorList>
            <person name="Beres S.B."/>
            <person name="Sylva G.L."/>
            <person name="Barbian K.D."/>
            <person name="Lei B."/>
            <person name="Hoff J.S."/>
            <person name="Mammarella N.D."/>
            <person name="Liu M.-Y."/>
            <person name="Smoot J.C."/>
            <person name="Porcella S.F."/>
            <person name="Parkins L.D."/>
            <person name="Campbell D.S."/>
            <person name="Smith T.M."/>
            <person name="McCormick J.K."/>
            <person name="Leung D.Y.M."/>
            <person name="Schlievert P.M."/>
            <person name="Musser J.M."/>
        </authorList>
    </citation>
    <scope>NUCLEOTIDE SEQUENCE [LARGE SCALE GENOMIC DNA]</scope>
    <source>
        <strain>ATCC BAA-595 / MGAS315</strain>
    </source>
</reference>
<name>ACKA_STRP3</name>
<keyword id="KW-0067">ATP-binding</keyword>
<keyword id="KW-0963">Cytoplasm</keyword>
<keyword id="KW-0418">Kinase</keyword>
<keyword id="KW-0460">Magnesium</keyword>
<keyword id="KW-0479">Metal-binding</keyword>
<keyword id="KW-0547">Nucleotide-binding</keyword>
<keyword id="KW-0808">Transferase</keyword>